<gene>
    <name evidence="7 9" type="primary">Sox6</name>
    <name type="synonym">Sox-6</name>
</gene>
<organism>
    <name type="scientific">Rattus norvegicus</name>
    <name type="common">Rat</name>
    <dbReference type="NCBI Taxonomy" id="10116"/>
    <lineage>
        <taxon>Eukaryota</taxon>
        <taxon>Metazoa</taxon>
        <taxon>Chordata</taxon>
        <taxon>Craniata</taxon>
        <taxon>Vertebrata</taxon>
        <taxon>Euteleostomi</taxon>
        <taxon>Mammalia</taxon>
        <taxon>Eutheria</taxon>
        <taxon>Euarchontoglires</taxon>
        <taxon>Glires</taxon>
        <taxon>Rodentia</taxon>
        <taxon>Myomorpha</taxon>
        <taxon>Muroidea</taxon>
        <taxon>Muridae</taxon>
        <taxon>Murinae</taxon>
        <taxon>Rattus</taxon>
    </lineage>
</organism>
<protein>
    <recommendedName>
        <fullName evidence="8">Transcription factor SOX-6</fullName>
    </recommendedName>
</protein>
<accession>A0A0G2JTZ2</accession>
<accession>F1MAJ5</accession>
<accession>Q4V8G3</accession>
<sequence length="827" mass="91816">MSSKQATSPFACTVDGEETMTQDLTSREKEEGSDQHPASHLPLHPIMHNKPHSEELPTLVSTIQQDADWDSVLSSQQRMESENNKLCSLYSFRNTSTSPHKPDEGSREREIMNSVTFGTPERRKGSLADVVDTLKQKKLEEMTRTEQEDSSCMEKLLSKDWKEKMERLNTSELLGEIKGTPESLAEKERQLSTMITQLISLREQLLAAHDEQKKLAASQIEKQRQQMDLARQQQEQIARQQQQLLQQQHKINLLQQQIQVQGHMPPLMIPIFPHDQRTLAAAAAAQQGFLFPPGITYKPGDNYPVQFIPSTMAAAAASGLSPLQLQKGHVSHPQINPRLKGISDRLGRNLDPYEHGGGHSYNHKQIEQLYAAQLASMQVSPGAKMPSTPQPPNSAGAVSPTGIKNEKRGTSPVTQVKDETTAQPLNLSSRPKTAEPVKSPTSPTQSLFPASKTSPVNLPNKSSIPSPIGGSLGRGSSLDILSSLNSPALFGDQDTVMKAIQEARKMREQIQREQQQQPHGVDGKLSSMNSMGLSNCRNEKERTRFENLGPQLTGKSSEDGKLGPGVIDLTRPEDAEGSKAMNGSAAKLQQYYCWPTGGATVAEARVYRDARGRASSEPHIKRPMNAFMVWAKDERRKILQAFPDMHNSNISKILGSRWKSMSNQEKQPYYEEQARLSKIHLEKYPNYKYKPRPKRTCIVDGKKLRIGEYKQLMRSRRQEMRQFFTVGQQPQIPITTGTGVVYPGAITMATTTPSPQMTSDCSSTSASPEPSLPVIQSTYGMKMDGASLAGNDMINGEDEMEAYDDYEDDPKSDYSSENEAPEPVSAN</sequence>
<dbReference type="EMBL" id="AABR07005536">
    <property type="status" value="NOT_ANNOTATED_CDS"/>
    <property type="molecule type" value="Genomic_DNA"/>
</dbReference>
<dbReference type="EMBL" id="AABR07005537">
    <property type="status" value="NOT_ANNOTATED_CDS"/>
    <property type="molecule type" value="Genomic_DNA"/>
</dbReference>
<dbReference type="EMBL" id="AABR07005538">
    <property type="status" value="NOT_ANNOTATED_CDS"/>
    <property type="molecule type" value="Genomic_DNA"/>
</dbReference>
<dbReference type="EMBL" id="AABR07071973">
    <property type="status" value="NOT_ANNOTATED_CDS"/>
    <property type="molecule type" value="Genomic_DNA"/>
</dbReference>
<dbReference type="EMBL" id="AC128610">
    <property type="status" value="NOT_ANNOTATED_CDS"/>
    <property type="molecule type" value="Genomic_DNA"/>
</dbReference>
<dbReference type="EMBL" id="CH473956">
    <property type="protein sequence ID" value="EDM17752.1"/>
    <property type="status" value="ALT_SEQ"/>
    <property type="molecule type" value="Genomic_DNA"/>
</dbReference>
<dbReference type="EMBL" id="BC097403">
    <property type="protein sequence ID" value="AAH97403.1"/>
    <property type="molecule type" value="mRNA"/>
</dbReference>
<dbReference type="RefSeq" id="NP_001019922.1">
    <property type="nucleotide sequence ID" value="NM_001024751.1"/>
</dbReference>
<dbReference type="RefSeq" id="XP_006230149.1">
    <property type="nucleotide sequence ID" value="XM_006230087.3"/>
</dbReference>
<dbReference type="RefSeq" id="XP_017444458.1">
    <property type="nucleotide sequence ID" value="XM_017588969.1"/>
</dbReference>
<dbReference type="SMR" id="A0A0G2JTZ2"/>
<dbReference type="FunCoup" id="A0A0G2JTZ2">
    <property type="interactions" value="1020"/>
</dbReference>
<dbReference type="STRING" id="10116.ENSRNOP00000068898"/>
<dbReference type="iPTMnet" id="A0A0G2JTZ2"/>
<dbReference type="PhosphoSitePlus" id="A0A0G2JTZ2"/>
<dbReference type="PaxDb" id="10116-ENSRNOP00000044088"/>
<dbReference type="GeneID" id="293165"/>
<dbReference type="KEGG" id="rno:293165"/>
<dbReference type="UCSC" id="RGD:1309000">
    <property type="organism name" value="rat"/>
</dbReference>
<dbReference type="AGR" id="RGD:1309000"/>
<dbReference type="CTD" id="55553"/>
<dbReference type="RGD" id="1309000">
    <property type="gene designation" value="Sox6"/>
</dbReference>
<dbReference type="eggNOG" id="KOG0528">
    <property type="taxonomic scope" value="Eukaryota"/>
</dbReference>
<dbReference type="HOGENOM" id="CLU_018522_0_1_1"/>
<dbReference type="InParanoid" id="A0A0G2JTZ2"/>
<dbReference type="OrthoDB" id="6247875at2759"/>
<dbReference type="Reactome" id="R-RNO-3769402">
    <property type="pathway name" value="Deactivation of the beta-catenin transactivating complex"/>
</dbReference>
<dbReference type="PRO" id="PR:A0A0G2JTZ2"/>
<dbReference type="Proteomes" id="UP000002494">
    <property type="component" value="Unplaced"/>
</dbReference>
<dbReference type="Proteomes" id="UP000234681">
    <property type="component" value="Chromosome 1"/>
</dbReference>
<dbReference type="ExpressionAtlas" id="A0A0G2JTZ2">
    <property type="expression patterns" value="baseline and differential"/>
</dbReference>
<dbReference type="GO" id="GO:0005737">
    <property type="term" value="C:cytoplasm"/>
    <property type="evidence" value="ECO:0007669"/>
    <property type="project" value="UniProtKB-SubCell"/>
</dbReference>
<dbReference type="GO" id="GO:0005634">
    <property type="term" value="C:nucleus"/>
    <property type="evidence" value="ECO:0000250"/>
    <property type="project" value="UniProtKB"/>
</dbReference>
<dbReference type="GO" id="GO:0000987">
    <property type="term" value="F:cis-regulatory region sequence-specific DNA binding"/>
    <property type="evidence" value="ECO:0000314"/>
    <property type="project" value="UniProtKB"/>
</dbReference>
<dbReference type="GO" id="GO:0003677">
    <property type="term" value="F:DNA binding"/>
    <property type="evidence" value="ECO:0000266"/>
    <property type="project" value="RGD"/>
</dbReference>
<dbReference type="GO" id="GO:0003700">
    <property type="term" value="F:DNA-binding transcription factor activity"/>
    <property type="evidence" value="ECO:0000250"/>
    <property type="project" value="UniProtKB"/>
</dbReference>
<dbReference type="GO" id="GO:0000981">
    <property type="term" value="F:DNA-binding transcription factor activity, RNA polymerase II-specific"/>
    <property type="evidence" value="ECO:0000318"/>
    <property type="project" value="GO_Central"/>
</dbReference>
<dbReference type="GO" id="GO:0001217">
    <property type="term" value="F:DNA-binding transcription repressor activity"/>
    <property type="evidence" value="ECO:0000266"/>
    <property type="project" value="RGD"/>
</dbReference>
<dbReference type="GO" id="GO:0001227">
    <property type="term" value="F:DNA-binding transcription repressor activity, RNA polymerase II-specific"/>
    <property type="evidence" value="ECO:0000266"/>
    <property type="project" value="RGD"/>
</dbReference>
<dbReference type="GO" id="GO:0042803">
    <property type="term" value="F:protein homodimerization activity"/>
    <property type="evidence" value="ECO:0000250"/>
    <property type="project" value="UniProtKB"/>
</dbReference>
<dbReference type="GO" id="GO:0000978">
    <property type="term" value="F:RNA polymerase II cis-regulatory region sequence-specific DNA binding"/>
    <property type="evidence" value="ECO:0000266"/>
    <property type="project" value="RGD"/>
</dbReference>
<dbReference type="GO" id="GO:0043565">
    <property type="term" value="F:sequence-specific DNA binding"/>
    <property type="evidence" value="ECO:0000266"/>
    <property type="project" value="RGD"/>
</dbReference>
<dbReference type="GO" id="GO:0000976">
    <property type="term" value="F:transcription cis-regulatory region binding"/>
    <property type="evidence" value="ECO:0000266"/>
    <property type="project" value="RGD"/>
</dbReference>
<dbReference type="GO" id="GO:0048708">
    <property type="term" value="P:astrocyte differentiation"/>
    <property type="evidence" value="ECO:0000315"/>
    <property type="project" value="RGD"/>
</dbReference>
<dbReference type="GO" id="GO:0007420">
    <property type="term" value="P:brain development"/>
    <property type="evidence" value="ECO:0000250"/>
    <property type="project" value="UniProtKB"/>
</dbReference>
<dbReference type="GO" id="GO:0055007">
    <property type="term" value="P:cardiac muscle cell differentiation"/>
    <property type="evidence" value="ECO:0000266"/>
    <property type="project" value="RGD"/>
</dbReference>
<dbReference type="GO" id="GO:0001502">
    <property type="term" value="P:cartilage condensation"/>
    <property type="evidence" value="ECO:0000250"/>
    <property type="project" value="UniProtKB"/>
</dbReference>
<dbReference type="GO" id="GO:0051216">
    <property type="term" value="P:cartilage development"/>
    <property type="evidence" value="ECO:0000250"/>
    <property type="project" value="UniProtKB"/>
</dbReference>
<dbReference type="GO" id="GO:0045165">
    <property type="term" value="P:cell fate commitment"/>
    <property type="evidence" value="ECO:0000266"/>
    <property type="project" value="RGD"/>
</dbReference>
<dbReference type="GO" id="GO:0000902">
    <property type="term" value="P:cell morphogenesis"/>
    <property type="evidence" value="ECO:0000266"/>
    <property type="project" value="RGD"/>
</dbReference>
<dbReference type="GO" id="GO:0071560">
    <property type="term" value="P:cellular response to transforming growth factor beta stimulus"/>
    <property type="evidence" value="ECO:0000266"/>
    <property type="project" value="RGD"/>
</dbReference>
<dbReference type="GO" id="GO:0007417">
    <property type="term" value="P:central nervous system development"/>
    <property type="evidence" value="ECO:0000318"/>
    <property type="project" value="GO_Central"/>
</dbReference>
<dbReference type="GO" id="GO:0002062">
    <property type="term" value="P:chondrocyte differentiation"/>
    <property type="evidence" value="ECO:0000250"/>
    <property type="project" value="UniProtKB"/>
</dbReference>
<dbReference type="GO" id="GO:0048821">
    <property type="term" value="P:erythrocyte development"/>
    <property type="evidence" value="ECO:0000266"/>
    <property type="project" value="RGD"/>
</dbReference>
<dbReference type="GO" id="GO:0030218">
    <property type="term" value="P:erythrocyte differentiation"/>
    <property type="evidence" value="ECO:0000266"/>
    <property type="project" value="RGD"/>
</dbReference>
<dbReference type="GO" id="GO:0010467">
    <property type="term" value="P:gene expression"/>
    <property type="evidence" value="ECO:0000266"/>
    <property type="project" value="RGD"/>
</dbReference>
<dbReference type="GO" id="GO:0030097">
    <property type="term" value="P:hemopoiesis"/>
    <property type="evidence" value="ECO:0000266"/>
    <property type="project" value="RGD"/>
</dbReference>
<dbReference type="GO" id="GO:0001701">
    <property type="term" value="P:in utero embryonic development"/>
    <property type="evidence" value="ECO:0000266"/>
    <property type="project" value="RGD"/>
</dbReference>
<dbReference type="GO" id="GO:2000726">
    <property type="term" value="P:negative regulation of cardiac muscle cell differentiation"/>
    <property type="evidence" value="ECO:0000266"/>
    <property type="project" value="RGD"/>
</dbReference>
<dbReference type="GO" id="GO:0045892">
    <property type="term" value="P:negative regulation of DNA-templated transcription"/>
    <property type="evidence" value="ECO:0000266"/>
    <property type="project" value="RGD"/>
</dbReference>
<dbReference type="GO" id="GO:0000122">
    <property type="term" value="P:negative regulation of transcription by RNA polymerase II"/>
    <property type="evidence" value="ECO:0000266"/>
    <property type="project" value="RGD"/>
</dbReference>
<dbReference type="GO" id="GO:0021778">
    <property type="term" value="P:oligodendrocyte cell fate specification"/>
    <property type="evidence" value="ECO:0000266"/>
    <property type="project" value="RGD"/>
</dbReference>
<dbReference type="GO" id="GO:0048709">
    <property type="term" value="P:oligodendrocyte differentiation"/>
    <property type="evidence" value="ECO:0000266"/>
    <property type="project" value="RGD"/>
</dbReference>
<dbReference type="GO" id="GO:0061036">
    <property type="term" value="P:positive regulation of cartilage development"/>
    <property type="evidence" value="ECO:0000266"/>
    <property type="project" value="RGD"/>
</dbReference>
<dbReference type="GO" id="GO:0032332">
    <property type="term" value="P:positive regulation of chondrocyte differentiation"/>
    <property type="evidence" value="ECO:0000266"/>
    <property type="project" value="RGD"/>
</dbReference>
<dbReference type="GO" id="GO:0045893">
    <property type="term" value="P:positive regulation of DNA-templated transcription"/>
    <property type="evidence" value="ECO:0000266"/>
    <property type="project" value="RGD"/>
</dbReference>
<dbReference type="GO" id="GO:2000741">
    <property type="term" value="P:positive regulation of mesenchymal stem cell differentiation"/>
    <property type="evidence" value="ECO:0000266"/>
    <property type="project" value="RGD"/>
</dbReference>
<dbReference type="GO" id="GO:0045944">
    <property type="term" value="P:positive regulation of transcription by RNA polymerase II"/>
    <property type="evidence" value="ECO:0000266"/>
    <property type="project" value="RGD"/>
</dbReference>
<dbReference type="GO" id="GO:0009791">
    <property type="term" value="P:post-embryonic development"/>
    <property type="evidence" value="ECO:0000266"/>
    <property type="project" value="RGD"/>
</dbReference>
<dbReference type="GO" id="GO:0006355">
    <property type="term" value="P:regulation of DNA-templated transcription"/>
    <property type="evidence" value="ECO:0000266"/>
    <property type="project" value="RGD"/>
</dbReference>
<dbReference type="GO" id="GO:0010468">
    <property type="term" value="P:regulation of gene expression"/>
    <property type="evidence" value="ECO:0000266"/>
    <property type="project" value="RGD"/>
</dbReference>
<dbReference type="GO" id="GO:0006357">
    <property type="term" value="P:regulation of transcription by RNA polymerase II"/>
    <property type="evidence" value="ECO:0000318"/>
    <property type="project" value="GO_Central"/>
</dbReference>
<dbReference type="GO" id="GO:0021529">
    <property type="term" value="P:spinal cord oligodendrocyte cell differentiation"/>
    <property type="evidence" value="ECO:0000266"/>
    <property type="project" value="RGD"/>
</dbReference>
<dbReference type="CDD" id="cd22042">
    <property type="entry name" value="HMG-box_EGL13-like"/>
    <property type="match status" value="1"/>
</dbReference>
<dbReference type="FunFam" id="1.10.30.10:FF:000003">
    <property type="entry name" value="Putative transcription factor SOX-6"/>
    <property type="match status" value="1"/>
</dbReference>
<dbReference type="Gene3D" id="1.10.30.10">
    <property type="entry name" value="High mobility group box domain"/>
    <property type="match status" value="1"/>
</dbReference>
<dbReference type="InterPro" id="IPR009071">
    <property type="entry name" value="HMG_box_dom"/>
</dbReference>
<dbReference type="InterPro" id="IPR036910">
    <property type="entry name" value="HMG_box_dom_sf"/>
</dbReference>
<dbReference type="InterPro" id="IPR051356">
    <property type="entry name" value="SOX/SOX-like_TF"/>
</dbReference>
<dbReference type="PANTHER" id="PTHR45789">
    <property type="entry name" value="FI18025P1"/>
    <property type="match status" value="1"/>
</dbReference>
<dbReference type="PANTHER" id="PTHR45789:SF1">
    <property type="entry name" value="TRANSCRIPTION FACTOR SOX-6"/>
    <property type="match status" value="1"/>
</dbReference>
<dbReference type="Pfam" id="PF00505">
    <property type="entry name" value="HMG_box"/>
    <property type="match status" value="1"/>
</dbReference>
<dbReference type="SMART" id="SM00398">
    <property type="entry name" value="HMG"/>
    <property type="match status" value="1"/>
</dbReference>
<dbReference type="SUPFAM" id="SSF47095">
    <property type="entry name" value="HMG-box"/>
    <property type="match status" value="1"/>
</dbReference>
<dbReference type="PROSITE" id="PS50118">
    <property type="entry name" value="HMG_BOX_2"/>
    <property type="match status" value="1"/>
</dbReference>
<reference key="1">
    <citation type="journal article" date="2004" name="Nature">
        <title>Genome sequence of the Brown Norway rat yields insights into mammalian evolution.</title>
        <authorList>
            <person name="Gibbs R.A."/>
            <person name="Weinstock G.M."/>
            <person name="Metzker M.L."/>
            <person name="Muzny D.M."/>
            <person name="Sodergren E.J."/>
            <person name="Scherer S."/>
            <person name="Scott G."/>
            <person name="Steffen D."/>
            <person name="Worley K.C."/>
            <person name="Burch P.E."/>
            <person name="Okwuonu G."/>
            <person name="Hines S."/>
            <person name="Lewis L."/>
            <person name="Deramo C."/>
            <person name="Delgado O."/>
            <person name="Dugan-Rocha S."/>
            <person name="Miner G."/>
            <person name="Morgan M."/>
            <person name="Hawes A."/>
            <person name="Gill R."/>
            <person name="Holt R.A."/>
            <person name="Adams M.D."/>
            <person name="Amanatides P.G."/>
            <person name="Baden-Tillson H."/>
            <person name="Barnstead M."/>
            <person name="Chin S."/>
            <person name="Evans C.A."/>
            <person name="Ferriera S."/>
            <person name="Fosler C."/>
            <person name="Glodek A."/>
            <person name="Gu Z."/>
            <person name="Jennings D."/>
            <person name="Kraft C.L."/>
            <person name="Nguyen T."/>
            <person name="Pfannkoch C.M."/>
            <person name="Sitter C."/>
            <person name="Sutton G.G."/>
            <person name="Venter J.C."/>
            <person name="Woodage T."/>
            <person name="Smith D."/>
            <person name="Lee H.-M."/>
            <person name="Gustafson E."/>
            <person name="Cahill P."/>
            <person name="Kana A."/>
            <person name="Doucette-Stamm L."/>
            <person name="Weinstock K."/>
            <person name="Fechtel K."/>
            <person name="Weiss R.B."/>
            <person name="Dunn D.M."/>
            <person name="Green E.D."/>
            <person name="Blakesley R.W."/>
            <person name="Bouffard G.G."/>
            <person name="De Jong P.J."/>
            <person name="Osoegawa K."/>
            <person name="Zhu B."/>
            <person name="Marra M."/>
            <person name="Schein J."/>
            <person name="Bosdet I."/>
            <person name="Fjell C."/>
            <person name="Jones S."/>
            <person name="Krzywinski M."/>
            <person name="Mathewson C."/>
            <person name="Siddiqui A."/>
            <person name="Wye N."/>
            <person name="McPherson J."/>
            <person name="Zhao S."/>
            <person name="Fraser C.M."/>
            <person name="Shetty J."/>
            <person name="Shatsman S."/>
            <person name="Geer K."/>
            <person name="Chen Y."/>
            <person name="Abramzon S."/>
            <person name="Nierman W.C."/>
            <person name="Havlak P.H."/>
            <person name="Chen R."/>
            <person name="Durbin K.J."/>
            <person name="Egan A."/>
            <person name="Ren Y."/>
            <person name="Song X.-Z."/>
            <person name="Li B."/>
            <person name="Liu Y."/>
            <person name="Qin X."/>
            <person name="Cawley S."/>
            <person name="Cooney A.J."/>
            <person name="D'Souza L.M."/>
            <person name="Martin K."/>
            <person name="Wu J.Q."/>
            <person name="Gonzalez-Garay M.L."/>
            <person name="Jackson A.R."/>
            <person name="Kalafus K.J."/>
            <person name="McLeod M.P."/>
            <person name="Milosavljevic A."/>
            <person name="Virk D."/>
            <person name="Volkov A."/>
            <person name="Wheeler D.A."/>
            <person name="Zhang Z."/>
            <person name="Bailey J.A."/>
            <person name="Eichler E.E."/>
            <person name="Tuzun E."/>
            <person name="Birney E."/>
            <person name="Mongin E."/>
            <person name="Ureta-Vidal A."/>
            <person name="Woodwark C."/>
            <person name="Zdobnov E."/>
            <person name="Bork P."/>
            <person name="Suyama M."/>
            <person name="Torrents D."/>
            <person name="Alexandersson M."/>
            <person name="Trask B.J."/>
            <person name="Young J.M."/>
            <person name="Huang H."/>
            <person name="Wang H."/>
            <person name="Xing H."/>
            <person name="Daniels S."/>
            <person name="Gietzen D."/>
            <person name="Schmidt J."/>
            <person name="Stevens K."/>
            <person name="Vitt U."/>
            <person name="Wingrove J."/>
            <person name="Camara F."/>
            <person name="Mar Alba M."/>
            <person name="Abril J.F."/>
            <person name="Guigo R."/>
            <person name="Smit A."/>
            <person name="Dubchak I."/>
            <person name="Rubin E.M."/>
            <person name="Couronne O."/>
            <person name="Poliakov A."/>
            <person name="Huebner N."/>
            <person name="Ganten D."/>
            <person name="Goesele C."/>
            <person name="Hummel O."/>
            <person name="Kreitler T."/>
            <person name="Lee Y.-A."/>
            <person name="Monti J."/>
            <person name="Schulz H."/>
            <person name="Zimdahl H."/>
            <person name="Himmelbauer H."/>
            <person name="Lehrach H."/>
            <person name="Jacob H.J."/>
            <person name="Bromberg S."/>
            <person name="Gullings-Handley J."/>
            <person name="Jensen-Seaman M.I."/>
            <person name="Kwitek A.E."/>
            <person name="Lazar J."/>
            <person name="Pasko D."/>
            <person name="Tonellato P.J."/>
            <person name="Twigger S."/>
            <person name="Ponting C.P."/>
            <person name="Duarte J.M."/>
            <person name="Rice S."/>
            <person name="Goodstadt L."/>
            <person name="Beatson S.A."/>
            <person name="Emes R.D."/>
            <person name="Winter E.E."/>
            <person name="Webber C."/>
            <person name="Brandt P."/>
            <person name="Nyakatura G."/>
            <person name="Adetobi M."/>
            <person name="Chiaromonte F."/>
            <person name="Elnitski L."/>
            <person name="Eswara P."/>
            <person name="Hardison R.C."/>
            <person name="Hou M."/>
            <person name="Kolbe D."/>
            <person name="Makova K."/>
            <person name="Miller W."/>
            <person name="Nekrutenko A."/>
            <person name="Riemer C."/>
            <person name="Schwartz S."/>
            <person name="Taylor J."/>
            <person name="Yang S."/>
            <person name="Zhang Y."/>
            <person name="Lindpaintner K."/>
            <person name="Andrews T.D."/>
            <person name="Caccamo M."/>
            <person name="Clamp M."/>
            <person name="Clarke L."/>
            <person name="Curwen V."/>
            <person name="Durbin R.M."/>
            <person name="Eyras E."/>
            <person name="Searle S.M."/>
            <person name="Cooper G.M."/>
            <person name="Batzoglou S."/>
            <person name="Brudno M."/>
            <person name="Sidow A."/>
            <person name="Stone E.A."/>
            <person name="Payseur B.A."/>
            <person name="Bourque G."/>
            <person name="Lopez-Otin C."/>
            <person name="Puente X.S."/>
            <person name="Chakrabarti K."/>
            <person name="Chatterji S."/>
            <person name="Dewey C."/>
            <person name="Pachter L."/>
            <person name="Bray N."/>
            <person name="Yap V.B."/>
            <person name="Caspi A."/>
            <person name="Tesler G."/>
            <person name="Pevzner P.A."/>
            <person name="Haussler D."/>
            <person name="Roskin K.M."/>
            <person name="Baertsch R."/>
            <person name="Clawson H."/>
            <person name="Furey T.S."/>
            <person name="Hinrichs A.S."/>
            <person name="Karolchik D."/>
            <person name="Kent W.J."/>
            <person name="Rosenbloom K.R."/>
            <person name="Trumbower H."/>
            <person name="Weirauch M."/>
            <person name="Cooper D.N."/>
            <person name="Stenson P.D."/>
            <person name="Ma B."/>
            <person name="Brent M."/>
            <person name="Arumugam M."/>
            <person name="Shteynberg D."/>
            <person name="Copley R.R."/>
            <person name="Taylor M.S."/>
            <person name="Riethman H."/>
            <person name="Mudunuri U."/>
            <person name="Peterson J."/>
            <person name="Guyer M."/>
            <person name="Felsenfeld A."/>
            <person name="Old S."/>
            <person name="Mockrin S."/>
            <person name="Collins F.S."/>
        </authorList>
    </citation>
    <scope>NUCLEOTIDE SEQUENCE [LARGE SCALE GENOMIC DNA]</scope>
    <source>
        <strain>Brown Norway</strain>
    </source>
</reference>
<reference key="2">
    <citation type="submission" date="2005-09" db="EMBL/GenBank/DDBJ databases">
        <authorList>
            <person name="Mural R.J."/>
            <person name="Adams M.D."/>
            <person name="Myers E.W."/>
            <person name="Smith H.O."/>
            <person name="Venter J.C."/>
        </authorList>
    </citation>
    <scope>NUCLEOTIDE SEQUENCE [LARGE SCALE GENOMIC DNA]</scope>
    <source>
        <strain>Brown Norway</strain>
    </source>
</reference>
<reference key="3">
    <citation type="journal article" date="2004" name="Genome Res.">
        <title>The status, quality, and expansion of the NIH full-length cDNA project: the Mammalian Gene Collection (MGC).</title>
        <authorList>
            <consortium name="The MGC Project Team"/>
        </authorList>
    </citation>
    <scope>NUCLEOTIDE SEQUENCE [LARGE SCALE MRNA] (ISOFORM 2)</scope>
    <source>
        <tissue>Testis</tissue>
    </source>
</reference>
<reference key="4">
    <citation type="journal article" date="2015" name="Nucleic Acids Res.">
        <title>The transcription factors SOX9 and SOX5/SOX6 cooperate genome-wide through super-enhancers to drive chondrogenesis.</title>
        <authorList>
            <person name="Liu C.F."/>
            <person name="Lefebvre V."/>
        </authorList>
    </citation>
    <scope>FUNCTION</scope>
    <scope>DNA-BINDING</scope>
</reference>
<feature type="chain" id="PRO_0000450218" description="Transcription factor SOX-6">
    <location>
        <begin position="1"/>
        <end position="827"/>
    </location>
</feature>
<feature type="DNA-binding region" description="HMG box" evidence="4">
    <location>
        <begin position="620"/>
        <end position="688"/>
    </location>
</feature>
<feature type="region of interest" description="Disordered" evidence="5">
    <location>
        <begin position="1"/>
        <end position="51"/>
    </location>
</feature>
<feature type="region of interest" description="Disordered" evidence="5">
    <location>
        <begin position="329"/>
        <end position="360"/>
    </location>
</feature>
<feature type="region of interest" description="Disordered" evidence="5">
    <location>
        <begin position="380"/>
        <end position="470"/>
    </location>
</feature>
<feature type="region of interest" description="Disordered" evidence="5">
    <location>
        <begin position="752"/>
        <end position="772"/>
    </location>
</feature>
<feature type="region of interest" description="Disordered" evidence="5">
    <location>
        <begin position="786"/>
        <end position="827"/>
    </location>
</feature>
<feature type="coiled-coil region" evidence="3">
    <location>
        <begin position="184"/>
        <end position="257"/>
    </location>
</feature>
<feature type="compositionally biased region" description="Polar residues" evidence="5">
    <location>
        <begin position="1"/>
        <end position="10"/>
    </location>
</feature>
<feature type="compositionally biased region" description="Basic and acidic residues" evidence="5">
    <location>
        <begin position="25"/>
        <end position="34"/>
    </location>
</feature>
<feature type="compositionally biased region" description="Basic and acidic residues" evidence="5">
    <location>
        <begin position="341"/>
        <end position="357"/>
    </location>
</feature>
<feature type="compositionally biased region" description="Polar residues" evidence="5">
    <location>
        <begin position="421"/>
        <end position="431"/>
    </location>
</feature>
<feature type="compositionally biased region" description="Polar residues" evidence="5">
    <location>
        <begin position="439"/>
        <end position="461"/>
    </location>
</feature>
<feature type="compositionally biased region" description="Acidic residues" evidence="5">
    <location>
        <begin position="795"/>
        <end position="808"/>
    </location>
</feature>
<feature type="modified residue" description="Phosphothreonine" evidence="1">
    <location>
        <position position="119"/>
    </location>
</feature>
<feature type="modified residue" description="Phosphoserine" evidence="1">
    <location>
        <position position="399"/>
    </location>
</feature>
<feature type="modified residue" description="Phosphothreonine" evidence="2">
    <location>
        <position position="401"/>
    </location>
</feature>
<feature type="modified residue" description="Phosphoserine" evidence="1">
    <location>
        <position position="439"/>
    </location>
</feature>
<feature type="modified residue" description="Phosphoserine" evidence="2">
    <location>
        <position position="442"/>
    </location>
</feature>
<feature type="cross-link" description="Glycyl lysine isopeptide (Lys-Gly) (interchain with G-Cter in SUMO)" evidence="1">
    <location>
        <position position="404"/>
    </location>
</feature>
<feature type="cross-link" description="Glycyl lysine isopeptide (Lys-Gly) (interchain with G-Cter in SUMO)" evidence="1">
    <location>
        <position position="417"/>
    </location>
</feature>
<feature type="splice variant" id="VSP_060589" description="In isoform 2.">
    <original>QKGHVSHPQINPRLKGISDRLGRNLDPYEHGGGHSYNHKQIE</original>
    <variation>Q</variation>
    <location>
        <begin position="326"/>
        <end position="367"/>
    </location>
</feature>
<feature type="sequence conflict" description="In Ref. 3; AABR07005536/AABR07005537/AABR07005538/AABR07071973/AC128610/AAH97403." evidence="8" ref="3">
    <original>I</original>
    <variation>IQ</variation>
    <location>
        <position position="258"/>
    </location>
</feature>
<keyword id="KW-0010">Activator</keyword>
<keyword id="KW-0025">Alternative splicing</keyword>
<keyword id="KW-0175">Coiled coil</keyword>
<keyword id="KW-0963">Cytoplasm</keyword>
<keyword id="KW-0217">Developmental protein</keyword>
<keyword id="KW-0221">Differentiation</keyword>
<keyword id="KW-0238">DNA-binding</keyword>
<keyword id="KW-1017">Isopeptide bond</keyword>
<keyword id="KW-0539">Nucleus</keyword>
<keyword id="KW-0597">Phosphoprotein</keyword>
<keyword id="KW-1185">Reference proteome</keyword>
<keyword id="KW-0678">Repressor</keyword>
<keyword id="KW-0804">Transcription</keyword>
<keyword id="KW-0805">Transcription regulation</keyword>
<keyword id="KW-0832">Ubl conjugation</keyword>
<evidence type="ECO:0000250" key="1">
    <source>
        <dbReference type="UniProtKB" id="P35712"/>
    </source>
</evidence>
<evidence type="ECO:0000250" key="2">
    <source>
        <dbReference type="UniProtKB" id="P40645"/>
    </source>
</evidence>
<evidence type="ECO:0000255" key="3"/>
<evidence type="ECO:0000255" key="4">
    <source>
        <dbReference type="PROSITE-ProRule" id="PRU00267"/>
    </source>
</evidence>
<evidence type="ECO:0000256" key="5">
    <source>
        <dbReference type="SAM" id="MobiDB-lite"/>
    </source>
</evidence>
<evidence type="ECO:0000269" key="6">
    <source>
    </source>
</evidence>
<evidence type="ECO:0000303" key="7">
    <source>
    </source>
</evidence>
<evidence type="ECO:0000305" key="8"/>
<evidence type="ECO:0000312" key="9">
    <source>
        <dbReference type="RGD" id="1309000"/>
    </source>
</evidence>
<name>SOX6_RAT</name>
<comment type="function">
    <text evidence="2 6">Transcription factor that plays a key role in several developmental processes, including neurogenesis, chondrocytes differentiation and cartilage formation (By similarity). Specifically binds the 5'-AACAAT-3' DNA motif present in enhancers and super-enhancers and promotes expression of genes important for chondrogenesis (By similarity). Required for overt chondrogenesis when condensed prechondrocytes differentiate into early stage chondrocytes: SOX5 and SOX6 cooperatively bind with SOX9 on active enhancers and super-enhancers associated with cartilage-specific genes, and thereby potentiate SOX9's ability to transactivate (PubMed:26150426). Not involved in precartilaginous condensation, the first step in chondrogenesis, during which skeletal progenitors differentiate into prechondrocytes (By similarity). Together with SOX5, required to form and maintain a pool of highly proliferating chondroblasts between epiphyses and metaphyses, to form columnar chondroblasts, delay chondrocyte prehypertrophy but promote hypertrophy, and to delay terminal differentiation of chondrocytes on contact with ossification fronts (By similarity). Binds to the proximal promoter region of the myelin protein MPZ gene, and is thereby involved in the differentiation of oligodendroglia in the developing spinal tube (By similarity). Binds to the gene promoter of MBP and acts as a transcriptional repressor (By similarity).</text>
</comment>
<comment type="subunit">
    <text evidence="2">Homodimer (By similarity). Interacts with DAZAP2 (By similarity). May interact with CENPK (By similarity).</text>
</comment>
<comment type="subcellular location">
    <subcellularLocation>
        <location evidence="2 4">Nucleus</location>
    </subcellularLocation>
    <subcellularLocation>
        <location evidence="2">Cytoplasm</location>
    </subcellularLocation>
</comment>
<comment type="alternative products">
    <event type="alternative splicing"/>
    <isoform>
        <id>A0A0G2JTZ2-1</id>
        <name>1</name>
        <sequence type="displayed"/>
    </isoform>
    <isoform>
        <id>A0A0G2JTZ2-2</id>
        <name>2</name>
        <sequence type="described" ref="VSP_060589"/>
    </isoform>
</comment>
<comment type="PTM">
    <text evidence="1">Sumoylation inhibits the transcriptional activity.</text>
</comment>
<comment type="sequence caution" evidence="8">
    <conflict type="erroneous gene model prediction">
        <sequence resource="EMBL-CDS" id="EDM17752"/>
    </conflict>
</comment>
<proteinExistence type="evidence at protein level"/>